<keyword id="KW-1185">Reference proteome</keyword>
<proteinExistence type="predicted"/>
<protein>
    <recommendedName>
        <fullName>Uncharacterized protein MJ0329</fullName>
    </recommendedName>
</protein>
<sequence length="616" mass="72037">MEDDKIQMETVSIDLAKDTAVNMALRILFTQIFTPYSIVSIDGKQLSKDVIDEISGLIDRHIRDLQLAFSDFLLKGKCYLYKLHYINPNSMNFKERKHWNPQKGRYEYCITYTIKRNNAERWWEVDTEEDVRVVIAPMELRQHFPADVEFYDEKYLGVYYNPIPIHETIQEIADQKNTLALKVLPLMVQKTLIPTIIGITQNTKAGEIIKKALSNHQNRTRVYIPATPDEVKFETISIGKDIPTDLIETMLYYYDSAIFMGLGTSISIVKASGQELTTSRTVDRNILRIVQGYQQEIERWIADQLEKMGYKGIWVKFANPDPDWEINMLQKAKMVAELKAQEQVAKYDFSALIERIFPSNEFGEILAAYPDLTEKEVEKLLKMAKEGKGGLEYADEEKQKLLEKKRKSLEKIISKLEKVGDKFGKKSMENFVNWILETYERLGYNELMQDWDELLREFTREEVDMFFLDYVAPTLNSLKIYDDLDQQTIDILKQHWEQAFYNIYSSYSQQFLDVLTEGIQKGLGEEEIAKNLKKVAKDVKGSRLQMRAREEMNKTYNLTRARRFWNDKVIYVTMKDERVRPSHRKLHGLIFVPAERPELVPPLGYGCRCTITPVRD</sequence>
<reference key="1">
    <citation type="journal article" date="1996" name="Science">
        <title>Complete genome sequence of the methanogenic archaeon, Methanococcus jannaschii.</title>
        <authorList>
            <person name="Bult C.J."/>
            <person name="White O."/>
            <person name="Olsen G.J."/>
            <person name="Zhou L."/>
            <person name="Fleischmann R.D."/>
            <person name="Sutton G.G."/>
            <person name="Blake J.A."/>
            <person name="FitzGerald L.M."/>
            <person name="Clayton R.A."/>
            <person name="Gocayne J.D."/>
            <person name="Kerlavage A.R."/>
            <person name="Dougherty B.A."/>
            <person name="Tomb J.-F."/>
            <person name="Adams M.D."/>
            <person name="Reich C.I."/>
            <person name="Overbeek R."/>
            <person name="Kirkness E.F."/>
            <person name="Weinstock K.G."/>
            <person name="Merrick J.M."/>
            <person name="Glodek A."/>
            <person name="Scott J.L."/>
            <person name="Geoghagen N.S.M."/>
            <person name="Weidman J.F."/>
            <person name="Fuhrmann J.L."/>
            <person name="Nguyen D."/>
            <person name="Utterback T.R."/>
            <person name="Kelley J.M."/>
            <person name="Peterson J.D."/>
            <person name="Sadow P.W."/>
            <person name="Hanna M.C."/>
            <person name="Cotton M.D."/>
            <person name="Roberts K.M."/>
            <person name="Hurst M.A."/>
            <person name="Kaine B.P."/>
            <person name="Borodovsky M."/>
            <person name="Klenk H.-P."/>
            <person name="Fraser C.M."/>
            <person name="Smith H.O."/>
            <person name="Woese C.R."/>
            <person name="Venter J.C."/>
        </authorList>
    </citation>
    <scope>NUCLEOTIDE SEQUENCE [LARGE SCALE GENOMIC DNA]</scope>
    <source>
        <strain>ATCC 43067 / DSM 2661 / JAL-1 / JCM 10045 / NBRC 100440</strain>
    </source>
</reference>
<accession>Q57775</accession>
<dbReference type="EMBL" id="L77117">
    <property type="protein sequence ID" value="AAB98317.1"/>
    <property type="molecule type" value="Genomic_DNA"/>
</dbReference>
<dbReference type="PIR" id="A64341">
    <property type="entry name" value="A64341"/>
</dbReference>
<dbReference type="RefSeq" id="WP_010869826.1">
    <property type="nucleotide sequence ID" value="NC_000909.1"/>
</dbReference>
<dbReference type="FunCoup" id="Q57775">
    <property type="interactions" value="2"/>
</dbReference>
<dbReference type="STRING" id="243232.MJ_0329"/>
<dbReference type="PaxDb" id="243232-MJ_0329"/>
<dbReference type="EnsemblBacteria" id="AAB98317">
    <property type="protein sequence ID" value="AAB98317"/>
    <property type="gene ID" value="MJ_0329"/>
</dbReference>
<dbReference type="GeneID" id="1451184"/>
<dbReference type="KEGG" id="mja:MJ_0329"/>
<dbReference type="eggNOG" id="arCOG09510">
    <property type="taxonomic scope" value="Archaea"/>
</dbReference>
<dbReference type="HOGENOM" id="CLU_446653_0_0_2"/>
<dbReference type="InParanoid" id="Q57775"/>
<dbReference type="OrthoDB" id="62042at2157"/>
<dbReference type="Proteomes" id="UP000000805">
    <property type="component" value="Chromosome"/>
</dbReference>
<dbReference type="InterPro" id="IPR006528">
    <property type="entry name" value="Phage_head_morphogenesis_dom"/>
</dbReference>
<dbReference type="NCBIfam" id="TIGR01641">
    <property type="entry name" value="phageSPP1_gp7"/>
    <property type="match status" value="1"/>
</dbReference>
<dbReference type="Pfam" id="PF04233">
    <property type="entry name" value="Phage_Mu_F"/>
    <property type="match status" value="1"/>
</dbReference>
<feature type="chain" id="PRO_0000106798" description="Uncharacterized protein MJ0329">
    <location>
        <begin position="1"/>
        <end position="616"/>
    </location>
</feature>
<organism>
    <name type="scientific">Methanocaldococcus jannaschii (strain ATCC 43067 / DSM 2661 / JAL-1 / JCM 10045 / NBRC 100440)</name>
    <name type="common">Methanococcus jannaschii</name>
    <dbReference type="NCBI Taxonomy" id="243232"/>
    <lineage>
        <taxon>Archaea</taxon>
        <taxon>Methanobacteriati</taxon>
        <taxon>Methanobacteriota</taxon>
        <taxon>Methanomada group</taxon>
        <taxon>Methanococci</taxon>
        <taxon>Methanococcales</taxon>
        <taxon>Methanocaldococcaceae</taxon>
        <taxon>Methanocaldococcus</taxon>
    </lineage>
</organism>
<gene>
    <name type="ordered locus">MJ0329</name>
</gene>
<name>Y329_METJA</name>